<protein>
    <recommendedName>
        <fullName>Hemoglobin subunit alpha</fullName>
    </recommendedName>
    <alternativeName>
        <fullName>Alpha-globin</fullName>
    </alternativeName>
    <alternativeName>
        <fullName>Hemoglobin alpha chain</fullName>
    </alternativeName>
</protein>
<name>HBA_TREBE</name>
<sequence length="142" mass="15632">SLSDKDKAAVRALWSKIGKSADAIGNDALSRMIVVYPQTKTYFSHWPDVTPGSPHIKAHGKKVMGGIALAVSKIDDLKTGLMELSEQHAYKLRVDPANFKILNHCILVVISTMFPKEFTPEAHVSLDKFLSGVALALAERYR</sequence>
<dbReference type="PIR" id="S21677">
    <property type="entry name" value="S21677"/>
</dbReference>
<dbReference type="PDB" id="1HBH">
    <property type="method" value="X-ray"/>
    <property type="resolution" value="2.20 A"/>
    <property type="chains" value="A/C=1-142"/>
</dbReference>
<dbReference type="PDB" id="1PBX">
    <property type="method" value="X-ray"/>
    <property type="resolution" value="2.50 A"/>
    <property type="chains" value="A=1-142"/>
</dbReference>
<dbReference type="PDB" id="1S5X">
    <property type="method" value="X-ray"/>
    <property type="resolution" value="2.40 A"/>
    <property type="chains" value="A=1-142"/>
</dbReference>
<dbReference type="PDB" id="1S5Y">
    <property type="method" value="X-ray"/>
    <property type="resolution" value="2.50 A"/>
    <property type="chains" value="A/C=1-142"/>
</dbReference>
<dbReference type="PDB" id="2H8D">
    <property type="method" value="X-ray"/>
    <property type="resolution" value="1.78 A"/>
    <property type="chains" value="A/C=1-142"/>
</dbReference>
<dbReference type="PDB" id="2H8F">
    <property type="method" value="X-ray"/>
    <property type="resolution" value="1.30 A"/>
    <property type="chains" value="A/C=1-142"/>
</dbReference>
<dbReference type="PDB" id="2PEG">
    <property type="method" value="X-ray"/>
    <property type="resolution" value="1.48 A"/>
    <property type="chains" value="A=1-142"/>
</dbReference>
<dbReference type="PDB" id="3GKV">
    <property type="method" value="X-ray"/>
    <property type="resolution" value="1.40 A"/>
    <property type="chains" value="A=1-142"/>
</dbReference>
<dbReference type="PDB" id="3GQG">
    <property type="method" value="X-ray"/>
    <property type="resolution" value="1.73 A"/>
    <property type="chains" value="A/C=1-142"/>
</dbReference>
<dbReference type="PDB" id="4G51">
    <property type="method" value="X-ray"/>
    <property type="resolution" value="2.50 A"/>
    <property type="chains" value="A/C=1-142"/>
</dbReference>
<dbReference type="PDB" id="4IRO">
    <property type="method" value="X-ray"/>
    <property type="resolution" value="2.20 A"/>
    <property type="chains" value="A/C=1-142"/>
</dbReference>
<dbReference type="PDB" id="4ODC">
    <property type="method" value="X-ray"/>
    <property type="resolution" value="1.54 A"/>
    <property type="chains" value="A=1-142"/>
</dbReference>
<dbReference type="PDBsum" id="1HBH"/>
<dbReference type="PDBsum" id="1PBX"/>
<dbReference type="PDBsum" id="1S5X"/>
<dbReference type="PDBsum" id="1S5Y"/>
<dbReference type="PDBsum" id="2H8D"/>
<dbReference type="PDBsum" id="2H8F"/>
<dbReference type="PDBsum" id="2PEG"/>
<dbReference type="PDBsum" id="3GKV"/>
<dbReference type="PDBsum" id="3GQG"/>
<dbReference type="PDBsum" id="4G51"/>
<dbReference type="PDBsum" id="4IRO"/>
<dbReference type="PDBsum" id="4ODC"/>
<dbReference type="SMR" id="P80043"/>
<dbReference type="MINT" id="P80043"/>
<dbReference type="iPTMnet" id="P80043"/>
<dbReference type="EvolutionaryTrace" id="P80043"/>
<dbReference type="GO" id="GO:0072562">
    <property type="term" value="C:blood microparticle"/>
    <property type="evidence" value="ECO:0007669"/>
    <property type="project" value="TreeGrafter"/>
</dbReference>
<dbReference type="GO" id="GO:0031838">
    <property type="term" value="C:haptoglobin-hemoglobin complex"/>
    <property type="evidence" value="ECO:0007669"/>
    <property type="project" value="TreeGrafter"/>
</dbReference>
<dbReference type="GO" id="GO:0005833">
    <property type="term" value="C:hemoglobin complex"/>
    <property type="evidence" value="ECO:0000250"/>
    <property type="project" value="UniProtKB"/>
</dbReference>
<dbReference type="GO" id="GO:0031720">
    <property type="term" value="F:haptoglobin binding"/>
    <property type="evidence" value="ECO:0007669"/>
    <property type="project" value="TreeGrafter"/>
</dbReference>
<dbReference type="GO" id="GO:0020037">
    <property type="term" value="F:heme binding"/>
    <property type="evidence" value="ECO:0007669"/>
    <property type="project" value="InterPro"/>
</dbReference>
<dbReference type="GO" id="GO:0005506">
    <property type="term" value="F:iron ion binding"/>
    <property type="evidence" value="ECO:0007669"/>
    <property type="project" value="InterPro"/>
</dbReference>
<dbReference type="GO" id="GO:0043177">
    <property type="term" value="F:organic acid binding"/>
    <property type="evidence" value="ECO:0007669"/>
    <property type="project" value="TreeGrafter"/>
</dbReference>
<dbReference type="GO" id="GO:0019825">
    <property type="term" value="F:oxygen binding"/>
    <property type="evidence" value="ECO:0007669"/>
    <property type="project" value="InterPro"/>
</dbReference>
<dbReference type="GO" id="GO:0005344">
    <property type="term" value="F:oxygen carrier activity"/>
    <property type="evidence" value="ECO:0000250"/>
    <property type="project" value="UniProtKB"/>
</dbReference>
<dbReference type="GO" id="GO:0004601">
    <property type="term" value="F:peroxidase activity"/>
    <property type="evidence" value="ECO:0007669"/>
    <property type="project" value="TreeGrafter"/>
</dbReference>
<dbReference type="GO" id="GO:0042744">
    <property type="term" value="P:hydrogen peroxide catabolic process"/>
    <property type="evidence" value="ECO:0007669"/>
    <property type="project" value="TreeGrafter"/>
</dbReference>
<dbReference type="GO" id="GO:0015671">
    <property type="term" value="P:oxygen transport"/>
    <property type="evidence" value="ECO:0000250"/>
    <property type="project" value="UniProtKB"/>
</dbReference>
<dbReference type="CDD" id="cd08927">
    <property type="entry name" value="Hb-alpha-like"/>
    <property type="match status" value="1"/>
</dbReference>
<dbReference type="FunFam" id="1.10.490.10:FF:000002">
    <property type="entry name" value="Hemoglobin subunit alpha"/>
    <property type="match status" value="1"/>
</dbReference>
<dbReference type="Gene3D" id="1.10.490.10">
    <property type="entry name" value="Globins"/>
    <property type="match status" value="1"/>
</dbReference>
<dbReference type="InterPro" id="IPR000971">
    <property type="entry name" value="Globin"/>
</dbReference>
<dbReference type="InterPro" id="IPR009050">
    <property type="entry name" value="Globin-like_sf"/>
</dbReference>
<dbReference type="InterPro" id="IPR012292">
    <property type="entry name" value="Globin/Proto"/>
</dbReference>
<dbReference type="InterPro" id="IPR002338">
    <property type="entry name" value="Hemoglobin_a-typ"/>
</dbReference>
<dbReference type="InterPro" id="IPR050056">
    <property type="entry name" value="Hemoglobin_oxygen_transport"/>
</dbReference>
<dbReference type="InterPro" id="IPR002339">
    <property type="entry name" value="Hemoglobin_pi"/>
</dbReference>
<dbReference type="PANTHER" id="PTHR11442">
    <property type="entry name" value="HEMOGLOBIN FAMILY MEMBER"/>
    <property type="match status" value="1"/>
</dbReference>
<dbReference type="PANTHER" id="PTHR11442:SF41">
    <property type="entry name" value="HEMOGLOBIN SUBUNIT ZETA"/>
    <property type="match status" value="1"/>
</dbReference>
<dbReference type="Pfam" id="PF00042">
    <property type="entry name" value="Globin"/>
    <property type="match status" value="1"/>
</dbReference>
<dbReference type="PRINTS" id="PR00612">
    <property type="entry name" value="ALPHAHAEM"/>
</dbReference>
<dbReference type="PRINTS" id="PR00815">
    <property type="entry name" value="PIHAEM"/>
</dbReference>
<dbReference type="SUPFAM" id="SSF46458">
    <property type="entry name" value="Globin-like"/>
    <property type="match status" value="1"/>
</dbReference>
<dbReference type="PROSITE" id="PS01033">
    <property type="entry name" value="GLOBIN"/>
    <property type="match status" value="1"/>
</dbReference>
<gene>
    <name type="primary">hba</name>
</gene>
<comment type="function">
    <text evidence="2">Involved in oxygen transport from gills to the various peripheral tissues.</text>
</comment>
<comment type="subunit">
    <text evidence="2">Hb1 is a heterotetramer of two alpha chains and two beta chains. HbC is a heterotetramer of two alpha chains and two beta-C chains.</text>
</comment>
<comment type="tissue specificity">
    <text>Red blood cells.</text>
</comment>
<comment type="miscellaneous">
    <text>This fish has three hemoglobins: Hb1 (major) and two minor hemoglobins (about 1-2% of the total). Hb1 has a strong alkaline Bohr effect, and at low pH exhibits the reduced ligand affinity and cooperativity that comprise the Root effect.</text>
</comment>
<comment type="similarity">
    <text evidence="1">Belongs to the globin family.</text>
</comment>
<evidence type="ECO:0000255" key="1">
    <source>
        <dbReference type="PROSITE-ProRule" id="PRU00238"/>
    </source>
</evidence>
<evidence type="ECO:0000269" key="2">
    <source>
    </source>
</evidence>
<evidence type="ECO:0000269" key="3">
    <source>
    </source>
</evidence>
<evidence type="ECO:0007829" key="4">
    <source>
        <dbReference type="PDB" id="1PBX"/>
    </source>
</evidence>
<evidence type="ECO:0007829" key="5">
    <source>
        <dbReference type="PDB" id="2H8F"/>
    </source>
</evidence>
<feature type="chain" id="PRO_0000052712" description="Hemoglobin subunit alpha">
    <location>
        <begin position="1"/>
        <end position="142"/>
    </location>
</feature>
<feature type="domain" description="Globin" evidence="1">
    <location>
        <begin position="1"/>
        <end position="142"/>
    </location>
</feature>
<feature type="binding site" evidence="1">
    <location>
        <position position="59"/>
    </location>
    <ligand>
        <name>O2</name>
        <dbReference type="ChEBI" id="CHEBI:15379"/>
    </ligand>
</feature>
<feature type="binding site" description="proximal binding residue" evidence="1">
    <location>
        <position position="88"/>
    </location>
    <ligand>
        <name>heme b</name>
        <dbReference type="ChEBI" id="CHEBI:60344"/>
    </ligand>
    <ligandPart>
        <name>Fe</name>
        <dbReference type="ChEBI" id="CHEBI:18248"/>
    </ligandPart>
</feature>
<feature type="modified residue" description="N-acetylserine" evidence="3">
    <location>
        <position position="1"/>
    </location>
</feature>
<feature type="helix" evidence="5">
    <location>
        <begin position="4"/>
        <end position="17"/>
    </location>
</feature>
<feature type="helix" evidence="5">
    <location>
        <begin position="18"/>
        <end position="20"/>
    </location>
</feature>
<feature type="helix" evidence="5">
    <location>
        <begin position="21"/>
        <end position="35"/>
    </location>
</feature>
<feature type="helix" evidence="5">
    <location>
        <begin position="37"/>
        <end position="43"/>
    </location>
</feature>
<feature type="strand" evidence="4">
    <location>
        <begin position="50"/>
        <end position="52"/>
    </location>
</feature>
<feature type="helix" evidence="5">
    <location>
        <begin position="54"/>
        <end position="72"/>
    </location>
</feature>
<feature type="turn" evidence="5">
    <location>
        <begin position="73"/>
        <end position="75"/>
    </location>
</feature>
<feature type="helix" evidence="5">
    <location>
        <begin position="77"/>
        <end position="80"/>
    </location>
</feature>
<feature type="helix" evidence="5">
    <location>
        <begin position="82"/>
        <end position="90"/>
    </location>
</feature>
<feature type="helix" evidence="5">
    <location>
        <begin position="97"/>
        <end position="113"/>
    </location>
</feature>
<feature type="turn" evidence="5">
    <location>
        <begin position="115"/>
        <end position="117"/>
    </location>
</feature>
<feature type="helix" evidence="5">
    <location>
        <begin position="120"/>
        <end position="137"/>
    </location>
</feature>
<feature type="turn" evidence="5">
    <location>
        <begin position="138"/>
        <end position="140"/>
    </location>
</feature>
<reference key="1">
    <citation type="journal article" date="1992" name="J. Mol. Biol.">
        <title>Haemoglobin of the antarctic fish Pagothenia bernacchii. Amino acid sequence, oxygen equilibria and crystal structure of its carbonmonoxy derivative.</title>
        <authorList>
            <person name="Camardella L."/>
            <person name="Caruso C."/>
            <person name="D'Avino R."/>
            <person name="di Prisco G."/>
            <person name="Rutigliano B."/>
            <person name="Tamburrini M."/>
            <person name="Fermi G."/>
            <person name="Perutz M.F."/>
        </authorList>
    </citation>
    <scope>PROTEIN SEQUENCE</scope>
    <scope>FUNCTION</scope>
    <scope>SUBUNIT</scope>
    <scope>X-RAY CRYSTALLOGRAPHY (2.5 ANGSTROMS)</scope>
    <source>
        <tissue>Blood</tissue>
    </source>
</reference>
<reference key="2">
    <citation type="journal article" date="1995" name="J. Mol. Biol.">
        <title>Structure of deoxyhaemoglobin of the antarctic fish Pagothenia bernacchii with an analysis of the structural basis of the Root effect by comparison of the liganded and unliganded haemoglobin structures.</title>
        <authorList>
            <person name="Ito N."/>
            <person name="Komiyama N.H."/>
            <person name="Fermi G."/>
        </authorList>
    </citation>
    <scope>X-RAY CRYSTALLOGRAPHY (2.2 ANGSTROMS)</scope>
    <scope>ACETYLATION AT SER-1</scope>
</reference>
<organism>
    <name type="scientific">Trematomus bernacchii</name>
    <name type="common">Emerald rockcod</name>
    <name type="synonym">Pseudotrematomus bernacchii</name>
    <dbReference type="NCBI Taxonomy" id="40690"/>
    <lineage>
        <taxon>Eukaryota</taxon>
        <taxon>Metazoa</taxon>
        <taxon>Chordata</taxon>
        <taxon>Craniata</taxon>
        <taxon>Vertebrata</taxon>
        <taxon>Euteleostomi</taxon>
        <taxon>Actinopterygii</taxon>
        <taxon>Neopterygii</taxon>
        <taxon>Teleostei</taxon>
        <taxon>Neoteleostei</taxon>
        <taxon>Acanthomorphata</taxon>
        <taxon>Eupercaria</taxon>
        <taxon>Perciformes</taxon>
        <taxon>Notothenioidei</taxon>
        <taxon>Nototheniidae</taxon>
        <taxon>Trematomus</taxon>
    </lineage>
</organism>
<accession>P80043</accession>
<keyword id="KW-0002">3D-structure</keyword>
<keyword id="KW-0007">Acetylation</keyword>
<keyword id="KW-0903">Direct protein sequencing</keyword>
<keyword id="KW-0349">Heme</keyword>
<keyword id="KW-0408">Iron</keyword>
<keyword id="KW-0479">Metal-binding</keyword>
<keyword id="KW-0561">Oxygen transport</keyword>
<keyword id="KW-0813">Transport</keyword>
<proteinExistence type="evidence at protein level"/>